<evidence type="ECO:0000255" key="1">
    <source>
        <dbReference type="PROSITE-ProRule" id="PRU00434"/>
    </source>
</evidence>
<evidence type="ECO:0000269" key="2">
    <source>
    </source>
</evidence>
<evidence type="ECO:0000305" key="3"/>
<gene>
    <name type="primary">glnQ</name>
    <name type="ordered locus">b0809</name>
    <name type="ordered locus">JW0794</name>
</gene>
<keyword id="KW-0029">Amino-acid transport</keyword>
<keyword id="KW-0067">ATP-binding</keyword>
<keyword id="KW-0997">Cell inner membrane</keyword>
<keyword id="KW-1003">Cell membrane</keyword>
<keyword id="KW-0472">Membrane</keyword>
<keyword id="KW-0547">Nucleotide-binding</keyword>
<keyword id="KW-1185">Reference proteome</keyword>
<keyword id="KW-0813">Transport</keyword>
<protein>
    <recommendedName>
        <fullName>Glutamine transport ATP-binding protein GlnQ</fullName>
    </recommendedName>
</protein>
<sequence length="240" mass="26731">MIEFKNVSKHFGPTQVLHNIDLNIAQGEVVVIIGPSGSGKSTLLRCINKLEEITSGDLIVDGLKVNDPKVDERLIRQEAGMVFQQFYLFPHLTALENVMFGPLRVRGANKEEAEKLARELLAKVGLAERAHHYPSELSGGQQQRVAIARALAVKPKMMLFDEPTSALDPELRHEVLKVMQDLAEEGMTMVIVTHEIGFAEKVASRLIFIDKGRIAEDGNPQVLIKNPPSQRLQEFLQHVS</sequence>
<name>GLNQ_ECOLI</name>
<organism>
    <name type="scientific">Escherichia coli (strain K12)</name>
    <dbReference type="NCBI Taxonomy" id="83333"/>
    <lineage>
        <taxon>Bacteria</taxon>
        <taxon>Pseudomonadati</taxon>
        <taxon>Pseudomonadota</taxon>
        <taxon>Gammaproteobacteria</taxon>
        <taxon>Enterobacterales</taxon>
        <taxon>Enterobacteriaceae</taxon>
        <taxon>Escherichia</taxon>
    </lineage>
</organism>
<feature type="chain" id="PRO_0000092334" description="Glutamine transport ATP-binding protein GlnQ">
    <location>
        <begin position="1"/>
        <end position="240"/>
    </location>
</feature>
<feature type="domain" description="ABC transporter" evidence="1">
    <location>
        <begin position="2"/>
        <end position="236"/>
    </location>
</feature>
<feature type="binding site" evidence="1">
    <location>
        <begin position="34"/>
        <end position="41"/>
    </location>
    <ligand>
        <name>ATP</name>
        <dbReference type="ChEBI" id="CHEBI:30616"/>
    </ligand>
</feature>
<reference key="1">
    <citation type="journal article" date="1986" name="Mol. Gen. Genet.">
        <title>Cloning and complete nucleotide sequence of the Escherichia coli glutamine permease operon (glnHPQ).</title>
        <authorList>
            <person name="Nohno T."/>
            <person name="Saito T."/>
            <person name="Hong J."/>
        </authorList>
    </citation>
    <scope>NUCLEOTIDE SEQUENCE [GENOMIC DNA]</scope>
    <source>
        <strain>K12</strain>
    </source>
</reference>
<reference key="2">
    <citation type="journal article" date="1996" name="DNA Res.">
        <title>A 718-kb DNA sequence of the Escherichia coli K-12 genome corresponding to the 12.7-28.0 min region on the linkage map.</title>
        <authorList>
            <person name="Oshima T."/>
            <person name="Aiba H."/>
            <person name="Baba T."/>
            <person name="Fujita K."/>
            <person name="Hayashi K."/>
            <person name="Honjo A."/>
            <person name="Ikemoto K."/>
            <person name="Inada T."/>
            <person name="Itoh T."/>
            <person name="Kajihara M."/>
            <person name="Kanai K."/>
            <person name="Kashimoto K."/>
            <person name="Kimura S."/>
            <person name="Kitagawa M."/>
            <person name="Makino K."/>
            <person name="Masuda S."/>
            <person name="Miki T."/>
            <person name="Mizobuchi K."/>
            <person name="Mori H."/>
            <person name="Motomura K."/>
            <person name="Nakamura Y."/>
            <person name="Nashimoto H."/>
            <person name="Nishio Y."/>
            <person name="Saito N."/>
            <person name="Sampei G."/>
            <person name="Seki Y."/>
            <person name="Tagami H."/>
            <person name="Takemoto K."/>
            <person name="Wada C."/>
            <person name="Yamamoto Y."/>
            <person name="Yano M."/>
            <person name="Horiuchi T."/>
        </authorList>
    </citation>
    <scope>NUCLEOTIDE SEQUENCE [LARGE SCALE GENOMIC DNA]</scope>
    <source>
        <strain>K12 / W3110 / ATCC 27325 / DSM 5911</strain>
    </source>
</reference>
<reference key="3">
    <citation type="journal article" date="1997" name="Science">
        <title>The complete genome sequence of Escherichia coli K-12.</title>
        <authorList>
            <person name="Blattner F.R."/>
            <person name="Plunkett G. III"/>
            <person name="Bloch C.A."/>
            <person name="Perna N.T."/>
            <person name="Burland V."/>
            <person name="Riley M."/>
            <person name="Collado-Vides J."/>
            <person name="Glasner J.D."/>
            <person name="Rode C.K."/>
            <person name="Mayhew G.F."/>
            <person name="Gregor J."/>
            <person name="Davis N.W."/>
            <person name="Kirkpatrick H.A."/>
            <person name="Goeden M.A."/>
            <person name="Rose D.J."/>
            <person name="Mau B."/>
            <person name="Shao Y."/>
        </authorList>
    </citation>
    <scope>NUCLEOTIDE SEQUENCE [LARGE SCALE GENOMIC DNA]</scope>
    <source>
        <strain>K12 / MG1655 / ATCC 47076</strain>
    </source>
</reference>
<reference key="4">
    <citation type="journal article" date="2006" name="Mol. Syst. Biol.">
        <title>Highly accurate genome sequences of Escherichia coli K-12 strains MG1655 and W3110.</title>
        <authorList>
            <person name="Hayashi K."/>
            <person name="Morooka N."/>
            <person name="Yamamoto Y."/>
            <person name="Fujita K."/>
            <person name="Isono K."/>
            <person name="Choi S."/>
            <person name="Ohtsubo E."/>
            <person name="Baba T."/>
            <person name="Wanner B.L."/>
            <person name="Mori H."/>
            <person name="Horiuchi T."/>
        </authorList>
    </citation>
    <scope>NUCLEOTIDE SEQUENCE [LARGE SCALE GENOMIC DNA]</scope>
    <source>
        <strain>K12 / W3110 / ATCC 27325 / DSM 5911</strain>
    </source>
</reference>
<reference key="5">
    <citation type="journal article" date="1997" name="Electrophoresis">
        <title>Escherichia coli proteome analysis using the gene-protein database.</title>
        <authorList>
            <person name="VanBogelen R.A."/>
            <person name="Abshire K.Z."/>
            <person name="Moldover B."/>
            <person name="Olson E.R."/>
            <person name="Neidhardt F.C."/>
        </authorList>
    </citation>
    <scope>IDENTIFICATION BY 2D-GEL</scope>
</reference>
<reference key="6">
    <citation type="journal article" date="2005" name="J. Biol. Chem.">
        <title>Protein complexes of the Escherichia coli cell envelope.</title>
        <authorList>
            <person name="Stenberg F."/>
            <person name="Chovanec P."/>
            <person name="Maslen S.L."/>
            <person name="Robinson C.V."/>
            <person name="Ilag L."/>
            <person name="von Heijne G."/>
            <person name="Daley D.O."/>
        </authorList>
    </citation>
    <scope>SUBUNIT</scope>
    <scope>SUBCELLULAR LOCATION</scope>
    <source>
        <strain>BL21-DE3</strain>
    </source>
</reference>
<accession>P10346</accession>
<comment type="function">
    <text>Part of the binding-protein-dependent transport system for glutamine. Probably responsible for energy coupling to the transport system.</text>
</comment>
<comment type="subunit">
    <text evidence="2">Heterotetramer with 2 subunits of GlnQ and 2 subunits of GlnP.</text>
</comment>
<comment type="subcellular location">
    <subcellularLocation>
        <location evidence="2">Cell inner membrane</location>
        <topology evidence="2">Peripheral membrane protein</topology>
    </subcellularLocation>
</comment>
<comment type="induction">
    <text>By lack of glutamine.</text>
</comment>
<comment type="similarity">
    <text evidence="3">Belongs to the ABC transporter superfamily.</text>
</comment>
<proteinExistence type="evidence at protein level"/>
<dbReference type="EMBL" id="X14180">
    <property type="protein sequence ID" value="CAA32384.1"/>
    <property type="molecule type" value="Genomic_DNA"/>
</dbReference>
<dbReference type="EMBL" id="U00096">
    <property type="protein sequence ID" value="AAC73896.1"/>
    <property type="molecule type" value="Genomic_DNA"/>
</dbReference>
<dbReference type="EMBL" id="AP009048">
    <property type="protein sequence ID" value="BAA35481.1"/>
    <property type="molecule type" value="Genomic_DNA"/>
</dbReference>
<dbReference type="PIR" id="S03183">
    <property type="entry name" value="QRECGQ"/>
</dbReference>
<dbReference type="RefSeq" id="NP_415330.1">
    <property type="nucleotide sequence ID" value="NC_000913.3"/>
</dbReference>
<dbReference type="RefSeq" id="WP_000569083.1">
    <property type="nucleotide sequence ID" value="NZ_STEB01000019.1"/>
</dbReference>
<dbReference type="SMR" id="P10346"/>
<dbReference type="BioGRID" id="4259970">
    <property type="interactions" value="15"/>
</dbReference>
<dbReference type="BioGRID" id="849809">
    <property type="interactions" value="2"/>
</dbReference>
<dbReference type="ComplexPortal" id="CPX-4822">
    <property type="entry name" value="Glutamine ABC transporter complex"/>
</dbReference>
<dbReference type="DIP" id="DIP-9786N"/>
<dbReference type="FunCoup" id="P10346">
    <property type="interactions" value="424"/>
</dbReference>
<dbReference type="IntAct" id="P10346">
    <property type="interactions" value="2"/>
</dbReference>
<dbReference type="STRING" id="511145.b0809"/>
<dbReference type="TCDB" id="3.A.1.3.2">
    <property type="family name" value="the atp-binding cassette (abc) superfamily"/>
</dbReference>
<dbReference type="jPOST" id="P10346"/>
<dbReference type="PaxDb" id="511145-b0809"/>
<dbReference type="EnsemblBacteria" id="AAC73896">
    <property type="protein sequence ID" value="AAC73896"/>
    <property type="gene ID" value="b0809"/>
</dbReference>
<dbReference type="GeneID" id="945435"/>
<dbReference type="KEGG" id="ecj:JW0794"/>
<dbReference type="KEGG" id="eco:b0809"/>
<dbReference type="KEGG" id="ecoc:C3026_05095"/>
<dbReference type="PATRIC" id="fig|1411691.4.peg.1469"/>
<dbReference type="EchoBASE" id="EB0384"/>
<dbReference type="eggNOG" id="COG1126">
    <property type="taxonomic scope" value="Bacteria"/>
</dbReference>
<dbReference type="HOGENOM" id="CLU_000604_1_22_6"/>
<dbReference type="InParanoid" id="P10346"/>
<dbReference type="OMA" id="SWKMEMG"/>
<dbReference type="OrthoDB" id="9802264at2"/>
<dbReference type="PhylomeDB" id="P10346"/>
<dbReference type="BioCyc" id="EcoCyc:GLNQ-MONOMER"/>
<dbReference type="BioCyc" id="MetaCyc:GLNQ-MONOMER"/>
<dbReference type="PRO" id="PR:P10346"/>
<dbReference type="Proteomes" id="UP000000625">
    <property type="component" value="Chromosome"/>
</dbReference>
<dbReference type="GO" id="GO:0055052">
    <property type="term" value="C:ATP-binding cassette (ABC) transporter complex, substrate-binding subunit-containing"/>
    <property type="evidence" value="ECO:0000303"/>
    <property type="project" value="ComplexPortal"/>
</dbReference>
<dbReference type="GO" id="GO:0016020">
    <property type="term" value="C:membrane"/>
    <property type="evidence" value="ECO:0000303"/>
    <property type="project" value="ComplexPortal"/>
</dbReference>
<dbReference type="GO" id="GO:0005886">
    <property type="term" value="C:plasma membrane"/>
    <property type="evidence" value="ECO:0000314"/>
    <property type="project" value="EcoCyc"/>
</dbReference>
<dbReference type="GO" id="GO:0015424">
    <property type="term" value="F:ABC-type amino acid transporter activity"/>
    <property type="evidence" value="ECO:0007669"/>
    <property type="project" value="InterPro"/>
</dbReference>
<dbReference type="GO" id="GO:0005524">
    <property type="term" value="F:ATP binding"/>
    <property type="evidence" value="ECO:0000255"/>
    <property type="project" value="EcoCyc"/>
</dbReference>
<dbReference type="GO" id="GO:0016887">
    <property type="term" value="F:ATP hydrolysis activity"/>
    <property type="evidence" value="ECO:0007669"/>
    <property type="project" value="InterPro"/>
</dbReference>
<dbReference type="GO" id="GO:0015186">
    <property type="term" value="F:L-glutamine transmembrane transporter activity"/>
    <property type="evidence" value="ECO:0000269"/>
    <property type="project" value="EcoCyc"/>
</dbReference>
<dbReference type="GO" id="GO:0006868">
    <property type="term" value="P:glutamine transport"/>
    <property type="evidence" value="ECO:0000269"/>
    <property type="project" value="EcoCyc"/>
</dbReference>
<dbReference type="GO" id="GO:1903803">
    <property type="term" value="P:L-glutamine import across plasma membrane"/>
    <property type="evidence" value="ECO:0000303"/>
    <property type="project" value="ComplexPortal"/>
</dbReference>
<dbReference type="CDD" id="cd03262">
    <property type="entry name" value="ABC_HisP_GlnQ"/>
    <property type="match status" value="1"/>
</dbReference>
<dbReference type="FunFam" id="3.40.50.300:FF:000020">
    <property type="entry name" value="Amino acid ABC transporter ATP-binding component"/>
    <property type="match status" value="1"/>
</dbReference>
<dbReference type="Gene3D" id="3.40.50.300">
    <property type="entry name" value="P-loop containing nucleotide triphosphate hydrolases"/>
    <property type="match status" value="1"/>
</dbReference>
<dbReference type="InterPro" id="IPR003593">
    <property type="entry name" value="AAA+_ATPase"/>
</dbReference>
<dbReference type="InterPro" id="IPR030679">
    <property type="entry name" value="ABC_ATPase_HisP-typ"/>
</dbReference>
<dbReference type="InterPro" id="IPR003439">
    <property type="entry name" value="ABC_transporter-like_ATP-bd"/>
</dbReference>
<dbReference type="InterPro" id="IPR017871">
    <property type="entry name" value="ABC_transporter-like_CS"/>
</dbReference>
<dbReference type="InterPro" id="IPR050086">
    <property type="entry name" value="MetN_ABC_transporter-like"/>
</dbReference>
<dbReference type="InterPro" id="IPR027417">
    <property type="entry name" value="P-loop_NTPase"/>
</dbReference>
<dbReference type="NCBIfam" id="NF007027">
    <property type="entry name" value="PRK09493.1"/>
    <property type="match status" value="1"/>
</dbReference>
<dbReference type="PANTHER" id="PTHR43166">
    <property type="entry name" value="AMINO ACID IMPORT ATP-BINDING PROTEIN"/>
    <property type="match status" value="1"/>
</dbReference>
<dbReference type="PANTHER" id="PTHR43166:SF14">
    <property type="entry name" value="GLUTAMINE TRANSPORT ATP-BINDING PROTEIN GLNQ"/>
    <property type="match status" value="1"/>
</dbReference>
<dbReference type="Pfam" id="PF00005">
    <property type="entry name" value="ABC_tran"/>
    <property type="match status" value="1"/>
</dbReference>
<dbReference type="PIRSF" id="PIRSF039085">
    <property type="entry name" value="ABC_ATPase_HisP"/>
    <property type="match status" value="1"/>
</dbReference>
<dbReference type="SMART" id="SM00382">
    <property type="entry name" value="AAA"/>
    <property type="match status" value="1"/>
</dbReference>
<dbReference type="SUPFAM" id="SSF52540">
    <property type="entry name" value="P-loop containing nucleoside triphosphate hydrolases"/>
    <property type="match status" value="1"/>
</dbReference>
<dbReference type="PROSITE" id="PS00211">
    <property type="entry name" value="ABC_TRANSPORTER_1"/>
    <property type="match status" value="1"/>
</dbReference>
<dbReference type="PROSITE" id="PS50893">
    <property type="entry name" value="ABC_TRANSPORTER_2"/>
    <property type="match status" value="1"/>
</dbReference>